<reference key="1">
    <citation type="journal article" date="2000" name="Nature">
        <title>The DNA sequence of human chromosome 21.</title>
        <authorList>
            <person name="Hattori M."/>
            <person name="Fujiyama A."/>
            <person name="Taylor T.D."/>
            <person name="Watanabe H."/>
            <person name="Yada T."/>
            <person name="Park H.-S."/>
            <person name="Toyoda A."/>
            <person name="Ishii K."/>
            <person name="Totoki Y."/>
            <person name="Choi D.-K."/>
            <person name="Groner Y."/>
            <person name="Soeda E."/>
            <person name="Ohki M."/>
            <person name="Takagi T."/>
            <person name="Sakaki Y."/>
            <person name="Taudien S."/>
            <person name="Blechschmidt K."/>
            <person name="Polley A."/>
            <person name="Menzel U."/>
            <person name="Delabar J."/>
            <person name="Kumpf K."/>
            <person name="Lehmann R."/>
            <person name="Patterson D."/>
            <person name="Reichwald K."/>
            <person name="Rump A."/>
            <person name="Schillhabel M."/>
            <person name="Schudy A."/>
            <person name="Zimmermann W."/>
            <person name="Rosenthal A."/>
            <person name="Kudoh J."/>
            <person name="Shibuya K."/>
            <person name="Kawasaki K."/>
            <person name="Asakawa S."/>
            <person name="Shintani A."/>
            <person name="Sasaki T."/>
            <person name="Nagamine K."/>
            <person name="Mitsuyama S."/>
            <person name="Antonarakis S.E."/>
            <person name="Minoshima S."/>
            <person name="Shimizu N."/>
            <person name="Nordsiek G."/>
            <person name="Hornischer K."/>
            <person name="Brandt P."/>
            <person name="Scharfe M."/>
            <person name="Schoen O."/>
            <person name="Desario A."/>
            <person name="Reichelt J."/>
            <person name="Kauer G."/>
            <person name="Bloecker H."/>
            <person name="Ramser J."/>
            <person name="Beck A."/>
            <person name="Klages S."/>
            <person name="Hennig S."/>
            <person name="Riesselmann L."/>
            <person name="Dagand E."/>
            <person name="Wehrmeyer S."/>
            <person name="Borzym K."/>
            <person name="Gardiner K."/>
            <person name="Nizetic D."/>
            <person name="Francis F."/>
            <person name="Lehrach H."/>
            <person name="Reinhardt R."/>
            <person name="Yaspo M.-L."/>
        </authorList>
    </citation>
    <scope>NUCLEOTIDE SEQUENCE [LARGE SCALE GENOMIC DNA]</scope>
</reference>
<reference key="2">
    <citation type="submission" date="2005-09" db="EMBL/GenBank/DDBJ databases">
        <authorList>
            <person name="Mural R.J."/>
            <person name="Istrail S."/>
            <person name="Sutton G.G."/>
            <person name="Florea L."/>
            <person name="Halpern A.L."/>
            <person name="Mobarry C.M."/>
            <person name="Lippert R."/>
            <person name="Walenz B."/>
            <person name="Shatkay H."/>
            <person name="Dew I."/>
            <person name="Miller J.R."/>
            <person name="Flanigan M.J."/>
            <person name="Edwards N.J."/>
            <person name="Bolanos R."/>
            <person name="Fasulo D."/>
            <person name="Halldorsson B.V."/>
            <person name="Hannenhalli S."/>
            <person name="Turner R."/>
            <person name="Yooseph S."/>
            <person name="Lu F."/>
            <person name="Nusskern D.R."/>
            <person name="Shue B.C."/>
            <person name="Zheng X.H."/>
            <person name="Zhong F."/>
            <person name="Delcher A.L."/>
            <person name="Huson D.H."/>
            <person name="Kravitz S.A."/>
            <person name="Mouchard L."/>
            <person name="Reinert K."/>
            <person name="Remington K.A."/>
            <person name="Clark A.G."/>
            <person name="Waterman M.S."/>
            <person name="Eichler E.E."/>
            <person name="Adams M.D."/>
            <person name="Hunkapiller M.W."/>
            <person name="Myers E.W."/>
            <person name="Venter J.C."/>
        </authorList>
    </citation>
    <scope>NUCLEOTIDE SEQUENCE [LARGE SCALE GENOMIC DNA]</scope>
</reference>
<protein>
    <recommendedName>
        <fullName evidence="2">Uncharacterized protein encoded by LINC01548</fullName>
    </recommendedName>
</protein>
<organism>
    <name type="scientific">Homo sapiens</name>
    <name type="common">Human</name>
    <dbReference type="NCBI Taxonomy" id="9606"/>
    <lineage>
        <taxon>Eukaryota</taxon>
        <taxon>Metazoa</taxon>
        <taxon>Chordata</taxon>
        <taxon>Craniata</taxon>
        <taxon>Vertebrata</taxon>
        <taxon>Euteleostomi</taxon>
        <taxon>Mammalia</taxon>
        <taxon>Eutheria</taxon>
        <taxon>Euarchontoglires</taxon>
        <taxon>Primates</taxon>
        <taxon>Haplorrhini</taxon>
        <taxon>Catarrhini</taxon>
        <taxon>Hominidae</taxon>
        <taxon>Homo</taxon>
    </lineage>
</organism>
<evidence type="ECO:0000256" key="1">
    <source>
        <dbReference type="SAM" id="MobiDB-lite"/>
    </source>
</evidence>
<evidence type="ECO:0000312" key="2">
    <source>
        <dbReference type="HGNC" id="HGNC:1296"/>
    </source>
</evidence>
<proteinExistence type="predicted"/>
<sequence length="108" mass="11668">MLAKGAEEGRSGGPRPAITLPGSLHFTCDLKTSPYCLTRAELMEHLPLRVAVHSMSPCHRSCFCGELKRGHPWNTPQVSSFPSSTTSLSHSCTTSHLDCSQQVESGSK</sequence>
<gene>
    <name evidence="2" type="primary">LINC01548</name>
    <name evidence="2" type="synonym">C21orf54</name>
</gene>
<name>CU054_HUMAN</name>
<feature type="chain" id="PRO_0000314848" description="Uncharacterized protein encoded by LINC01548">
    <location>
        <begin position="1"/>
        <end position="108"/>
    </location>
</feature>
<feature type="region of interest" description="Disordered" evidence="1">
    <location>
        <begin position="75"/>
        <end position="94"/>
    </location>
</feature>
<feature type="compositionally biased region" description="Low complexity" evidence="1">
    <location>
        <begin position="79"/>
        <end position="94"/>
    </location>
</feature>
<dbReference type="EMBL" id="AP000290">
    <property type="status" value="NOT_ANNOTATED_CDS"/>
    <property type="molecule type" value="Genomic_DNA"/>
</dbReference>
<dbReference type="EMBL" id="CH471079">
    <property type="protein sequence ID" value="EAX09847.1"/>
    <property type="molecule type" value="Genomic_DNA"/>
</dbReference>
<dbReference type="BioMuta" id="HGNC:1296"/>
<dbReference type="AGR" id="HGNC:1296"/>
<dbReference type="GeneCards" id="LINC01548"/>
<dbReference type="HGNC" id="HGNC:1296">
    <property type="gene designation" value="LINC01548"/>
</dbReference>
<dbReference type="neXtProt" id="NX_A6NM66"/>
<dbReference type="InParanoid" id="A6NM66"/>
<dbReference type="PAN-GO" id="A6NM66">
    <property type="GO annotations" value="0 GO annotations based on evolutionary models"/>
</dbReference>
<dbReference type="PhylomeDB" id="A6NM66"/>
<dbReference type="ChiTaRS" id="LINC01548">
    <property type="organism name" value="human"/>
</dbReference>
<dbReference type="Pharos" id="A6NM66">
    <property type="development level" value="Tdark"/>
</dbReference>
<dbReference type="PRO" id="PR:A6NM66"/>
<dbReference type="Proteomes" id="UP000005640">
    <property type="component" value="Unplaced"/>
</dbReference>
<dbReference type="RNAct" id="A6NM66">
    <property type="molecule type" value="protein"/>
</dbReference>
<keyword id="KW-1185">Reference proteome</keyword>
<accession>A6NM66</accession>